<evidence type="ECO:0000250" key="1">
    <source>
        <dbReference type="UniProtKB" id="P68363"/>
    </source>
</evidence>
<evidence type="ECO:0000250" key="2">
    <source>
        <dbReference type="UniProtKB" id="P68369"/>
    </source>
</evidence>
<evidence type="ECO:0000250" key="3">
    <source>
        <dbReference type="UniProtKB" id="P68373"/>
    </source>
</evidence>
<evidence type="ECO:0000250" key="4">
    <source>
        <dbReference type="UniProtKB" id="Q71U36"/>
    </source>
</evidence>
<evidence type="ECO:0000256" key="5">
    <source>
        <dbReference type="SAM" id="MobiDB-lite"/>
    </source>
</evidence>
<evidence type="ECO:0000269" key="6">
    <source>
    </source>
</evidence>
<evidence type="ECO:0000269" key="7">
    <source>
    </source>
</evidence>
<evidence type="ECO:0000269" key="8">
    <source>
    </source>
</evidence>
<evidence type="ECO:0000269" key="9">
    <source>
    </source>
</evidence>
<evidence type="ECO:0000269" key="10">
    <source>
    </source>
</evidence>
<evidence type="ECO:0000269" key="11">
    <source>
    </source>
</evidence>
<evidence type="ECO:0000269" key="12">
    <source>
    </source>
</evidence>
<evidence type="ECO:0000269" key="13">
    <source>
    </source>
</evidence>
<evidence type="ECO:0000269" key="14">
    <source>
    </source>
</evidence>
<evidence type="ECO:0000269" key="15">
    <source>
    </source>
</evidence>
<evidence type="ECO:0000305" key="16"/>
<evidence type="ECO:0000305" key="17">
    <source>
    </source>
</evidence>
<evidence type="ECO:0000305" key="18">
    <source>
    </source>
</evidence>
<evidence type="ECO:0000305" key="19">
    <source>
    </source>
</evidence>
<name>TBA1B_MOUSE</name>
<keyword id="KW-0007">Acetylation</keyword>
<keyword id="KW-0963">Cytoplasm</keyword>
<keyword id="KW-0206">Cytoskeleton</keyword>
<keyword id="KW-0903">Direct protein sequencing</keyword>
<keyword id="KW-0342">GTP-binding</keyword>
<keyword id="KW-0378">Hydrolase</keyword>
<keyword id="KW-1017">Isopeptide bond</keyword>
<keyword id="KW-0460">Magnesium</keyword>
<keyword id="KW-0479">Metal-binding</keyword>
<keyword id="KW-0488">Methylation</keyword>
<keyword id="KW-0493">Microtubule</keyword>
<keyword id="KW-0944">Nitration</keyword>
<keyword id="KW-0547">Nucleotide-binding</keyword>
<keyword id="KW-0597">Phosphoprotein</keyword>
<keyword id="KW-1185">Reference proteome</keyword>
<keyword id="KW-0832">Ubl conjugation</keyword>
<proteinExistence type="evidence at protein level"/>
<dbReference type="EC" id="3.6.5.-" evidence="1"/>
<dbReference type="EMBL" id="M13446">
    <property type="protein sequence ID" value="AAA40500.1"/>
    <property type="molecule type" value="mRNA"/>
</dbReference>
<dbReference type="EMBL" id="AK075955">
    <property type="protein sequence ID" value="BAC36080.1"/>
    <property type="molecule type" value="mRNA"/>
</dbReference>
<dbReference type="EMBL" id="AK137885">
    <property type="protein sequence ID" value="BAE23512.1"/>
    <property type="molecule type" value="mRNA"/>
</dbReference>
<dbReference type="EMBL" id="AK150128">
    <property type="protein sequence ID" value="BAE29327.1"/>
    <property type="molecule type" value="mRNA"/>
</dbReference>
<dbReference type="EMBL" id="AK150179">
    <property type="protein sequence ID" value="BAE29362.1"/>
    <property type="molecule type" value="mRNA"/>
</dbReference>
<dbReference type="EMBL" id="AK150968">
    <property type="protein sequence ID" value="BAE29999.1"/>
    <property type="molecule type" value="mRNA"/>
</dbReference>
<dbReference type="EMBL" id="AK151199">
    <property type="protein sequence ID" value="BAE30196.1"/>
    <property type="molecule type" value="mRNA"/>
</dbReference>
<dbReference type="EMBL" id="AK151809">
    <property type="protein sequence ID" value="BAE30708.1"/>
    <property type="molecule type" value="mRNA"/>
</dbReference>
<dbReference type="EMBL" id="AK152298">
    <property type="protein sequence ID" value="BAE31107.1"/>
    <property type="molecule type" value="mRNA"/>
</dbReference>
<dbReference type="EMBL" id="AK153064">
    <property type="protein sequence ID" value="BAE31690.1"/>
    <property type="molecule type" value="mRNA"/>
</dbReference>
<dbReference type="EMBL" id="AK153254">
    <property type="protein sequence ID" value="BAE31845.1"/>
    <property type="molecule type" value="mRNA"/>
</dbReference>
<dbReference type="EMBL" id="AK158958">
    <property type="protein sequence ID" value="BAE34741.1"/>
    <property type="molecule type" value="mRNA"/>
</dbReference>
<dbReference type="EMBL" id="AK164428">
    <property type="protein sequence ID" value="BAE37783.1"/>
    <property type="molecule type" value="mRNA"/>
</dbReference>
<dbReference type="EMBL" id="AK168770">
    <property type="protein sequence ID" value="BAE40606.1"/>
    <property type="molecule type" value="mRNA"/>
</dbReference>
<dbReference type="EMBL" id="AK169075">
    <property type="protein sequence ID" value="BAE40860.1"/>
    <property type="molecule type" value="mRNA"/>
</dbReference>
<dbReference type="EMBL" id="AK169092">
    <property type="protein sequence ID" value="BAE40875.1"/>
    <property type="molecule type" value="mRNA"/>
</dbReference>
<dbReference type="EMBL" id="AK169130">
    <property type="protein sequence ID" value="BAE40909.1"/>
    <property type="molecule type" value="mRNA"/>
</dbReference>
<dbReference type="EMBL" id="AK169665">
    <property type="protein sequence ID" value="BAE41287.1"/>
    <property type="molecule type" value="mRNA"/>
</dbReference>
<dbReference type="EMBL" id="BC002219">
    <property type="protein sequence ID" value="AAH02219.1"/>
    <property type="molecule type" value="mRNA"/>
</dbReference>
<dbReference type="EMBL" id="BC008117">
    <property type="protein sequence ID" value="AAH08117.1"/>
    <property type="molecule type" value="mRNA"/>
</dbReference>
<dbReference type="EMBL" id="BC063777">
    <property type="protein sequence ID" value="AAH63777.1"/>
    <property type="molecule type" value="mRNA"/>
</dbReference>
<dbReference type="EMBL" id="BC083120">
    <property type="protein sequence ID" value="AAH83120.1"/>
    <property type="molecule type" value="mRNA"/>
</dbReference>
<dbReference type="EMBL" id="BC098321">
    <property type="protein sequence ID" value="AAH98321.1"/>
    <property type="molecule type" value="mRNA"/>
</dbReference>
<dbReference type="EMBL" id="BC108337">
    <property type="protein sequence ID" value="AAI08338.1"/>
    <property type="molecule type" value="mRNA"/>
</dbReference>
<dbReference type="EMBL" id="BC108394">
    <property type="protein sequence ID" value="AAI08395.1"/>
    <property type="molecule type" value="mRNA"/>
</dbReference>
<dbReference type="EMBL" id="M28727">
    <property type="protein sequence ID" value="AAA40507.1"/>
    <property type="molecule type" value="mRNA"/>
</dbReference>
<dbReference type="CCDS" id="CCDS37195.1"/>
<dbReference type="PIR" id="I77425">
    <property type="entry name" value="I77425"/>
</dbReference>
<dbReference type="PIR" id="S29013">
    <property type="entry name" value="A61275"/>
</dbReference>
<dbReference type="RefSeq" id="NP_035784.1">
    <property type="nucleotide sequence ID" value="NM_011654.2"/>
</dbReference>
<dbReference type="SMR" id="P05213"/>
<dbReference type="BioGRID" id="204373">
    <property type="interactions" value="53"/>
</dbReference>
<dbReference type="CORUM" id="P05213"/>
<dbReference type="FunCoup" id="P05213">
    <property type="interactions" value="1535"/>
</dbReference>
<dbReference type="IntAct" id="P05213">
    <property type="interactions" value="21"/>
</dbReference>
<dbReference type="MINT" id="P05213"/>
<dbReference type="STRING" id="10090.ENSMUSP00000076777"/>
<dbReference type="GlyGen" id="P05213">
    <property type="glycosylation" value="1 site, 1 O-linked glycan (1 site)"/>
</dbReference>
<dbReference type="iPTMnet" id="P05213"/>
<dbReference type="PhosphoSitePlus" id="P05213"/>
<dbReference type="SwissPalm" id="P05213"/>
<dbReference type="REPRODUCTION-2DPAGE" id="P05213"/>
<dbReference type="jPOST" id="P05213"/>
<dbReference type="PaxDb" id="10090-ENSMUSP00000076777"/>
<dbReference type="PeptideAtlas" id="P05213"/>
<dbReference type="Pumba" id="P05213"/>
<dbReference type="TopDownProteomics" id="P05213"/>
<dbReference type="ABCD" id="P05213">
    <property type="antibodies" value="1 sequenced antibody"/>
</dbReference>
<dbReference type="Antibodypedia" id="3156">
    <property type="antibodies" value="640 antibodies from 42 providers"/>
</dbReference>
<dbReference type="DNASU" id="22143"/>
<dbReference type="Ensembl" id="ENSMUST00000077577.8">
    <property type="protein sequence ID" value="ENSMUSP00000076777.8"/>
    <property type="gene ID" value="ENSMUSG00000023004.9"/>
</dbReference>
<dbReference type="GeneID" id="22143"/>
<dbReference type="KEGG" id="mmu:22143"/>
<dbReference type="UCSC" id="uc007xoj.1">
    <property type="organism name" value="mouse"/>
</dbReference>
<dbReference type="AGR" id="MGI:107804"/>
<dbReference type="CTD" id="10376"/>
<dbReference type="MGI" id="MGI:107804">
    <property type="gene designation" value="Tuba1b"/>
</dbReference>
<dbReference type="VEuPathDB" id="HostDB:ENSMUSG00000023004"/>
<dbReference type="eggNOG" id="KOG1376">
    <property type="taxonomic scope" value="Eukaryota"/>
</dbReference>
<dbReference type="GeneTree" id="ENSGT00950000182825"/>
<dbReference type="HOGENOM" id="CLU_015718_0_0_1"/>
<dbReference type="InParanoid" id="P05213"/>
<dbReference type="OMA" id="ESCYDIC"/>
<dbReference type="OrthoDB" id="1844at2759"/>
<dbReference type="PhylomeDB" id="P05213"/>
<dbReference type="TreeFam" id="TF300314"/>
<dbReference type="Reactome" id="R-MMU-190840">
    <property type="pathway name" value="Microtubule-dependent trafficking of connexons from Golgi to the plasma membrane"/>
</dbReference>
<dbReference type="Reactome" id="R-MMU-2132295">
    <property type="pathway name" value="MHC class II antigen presentation"/>
</dbReference>
<dbReference type="Reactome" id="R-MMU-2467813">
    <property type="pathway name" value="Separation of Sister Chromatids"/>
</dbReference>
<dbReference type="Reactome" id="R-MMU-2500257">
    <property type="pathway name" value="Resolution of Sister Chromatid Cohesion"/>
</dbReference>
<dbReference type="Reactome" id="R-MMU-3371497">
    <property type="pathway name" value="HSP90 chaperone cycle for steroid hormone receptors (SHR) in the presence of ligand"/>
</dbReference>
<dbReference type="Reactome" id="R-MMU-380320">
    <property type="pathway name" value="Recruitment of NuMA to mitotic centrosomes"/>
</dbReference>
<dbReference type="Reactome" id="R-MMU-437239">
    <property type="pathway name" value="Recycling pathway of L1"/>
</dbReference>
<dbReference type="Reactome" id="R-MMU-5610787">
    <property type="pathway name" value="Hedgehog 'off' state"/>
</dbReference>
<dbReference type="Reactome" id="R-MMU-5617833">
    <property type="pathway name" value="Cilium Assembly"/>
</dbReference>
<dbReference type="Reactome" id="R-MMU-5620924">
    <property type="pathway name" value="Intraflagellar transport"/>
</dbReference>
<dbReference type="Reactome" id="R-MMU-5626467">
    <property type="pathway name" value="RHO GTPases activate IQGAPs"/>
</dbReference>
<dbReference type="Reactome" id="R-MMU-5663220">
    <property type="pathway name" value="RHO GTPases Activate Formins"/>
</dbReference>
<dbReference type="Reactome" id="R-MMU-6807878">
    <property type="pathway name" value="COPI-mediated anterograde transport"/>
</dbReference>
<dbReference type="Reactome" id="R-MMU-6811434">
    <property type="pathway name" value="COPI-dependent Golgi-to-ER retrograde traffic"/>
</dbReference>
<dbReference type="Reactome" id="R-MMU-6811436">
    <property type="pathway name" value="COPI-independent Golgi-to-ER retrograde traffic"/>
</dbReference>
<dbReference type="Reactome" id="R-MMU-68877">
    <property type="pathway name" value="Mitotic Prometaphase"/>
</dbReference>
<dbReference type="Reactome" id="R-MMU-8852276">
    <property type="pathway name" value="The role of GTSE1 in G2/M progression after G2 checkpoint"/>
</dbReference>
<dbReference type="Reactome" id="R-MMU-8955332">
    <property type="pathway name" value="Carboxyterminal post-translational modifications of tubulin"/>
</dbReference>
<dbReference type="Reactome" id="R-MMU-9013407">
    <property type="pathway name" value="RHOH GTPase cycle"/>
</dbReference>
<dbReference type="Reactome" id="R-MMU-9646399">
    <property type="pathway name" value="Aggrephagy"/>
</dbReference>
<dbReference type="Reactome" id="R-MMU-9648025">
    <property type="pathway name" value="EML4 and NUDC in mitotic spindle formation"/>
</dbReference>
<dbReference type="Reactome" id="R-MMU-9668328">
    <property type="pathway name" value="Sealing of the nuclear envelope (NE) by ESCRT-III"/>
</dbReference>
<dbReference type="Reactome" id="R-MMU-983189">
    <property type="pathway name" value="Kinesins"/>
</dbReference>
<dbReference type="Reactome" id="R-MMU-9833482">
    <property type="pathway name" value="PKR-mediated signaling"/>
</dbReference>
<dbReference type="BioGRID-ORCS" id="22143">
    <property type="hits" value="15 hits in 45 CRISPR screens"/>
</dbReference>
<dbReference type="CD-CODE" id="CE726F99">
    <property type="entry name" value="Postsynaptic density"/>
</dbReference>
<dbReference type="ChiTaRS" id="Tuba1b">
    <property type="organism name" value="mouse"/>
</dbReference>
<dbReference type="PRO" id="PR:P05213"/>
<dbReference type="Proteomes" id="UP000000589">
    <property type="component" value="Chromosome 15"/>
</dbReference>
<dbReference type="RNAct" id="P05213">
    <property type="molecule type" value="protein"/>
</dbReference>
<dbReference type="Bgee" id="ENSMUSG00000023004">
    <property type="expression patterns" value="Expressed in ventricular zone and 69 other cell types or tissues"/>
</dbReference>
<dbReference type="GO" id="GO:0005929">
    <property type="term" value="C:cilium"/>
    <property type="evidence" value="ECO:0007669"/>
    <property type="project" value="Ensembl"/>
</dbReference>
<dbReference type="GO" id="GO:0005881">
    <property type="term" value="C:cytoplasmic microtubule"/>
    <property type="evidence" value="ECO:0000314"/>
    <property type="project" value="MGI"/>
</dbReference>
<dbReference type="GO" id="GO:0005829">
    <property type="term" value="C:cytosol"/>
    <property type="evidence" value="ECO:0000304"/>
    <property type="project" value="Reactome"/>
</dbReference>
<dbReference type="GO" id="GO:0043209">
    <property type="term" value="C:myelin sheath"/>
    <property type="evidence" value="ECO:0007005"/>
    <property type="project" value="UniProtKB"/>
</dbReference>
<dbReference type="GO" id="GO:0003725">
    <property type="term" value="F:double-stranded RNA binding"/>
    <property type="evidence" value="ECO:0000266"/>
    <property type="project" value="MGI"/>
</dbReference>
<dbReference type="GO" id="GO:0005525">
    <property type="term" value="F:GTP binding"/>
    <property type="evidence" value="ECO:0000250"/>
    <property type="project" value="UniProtKB"/>
</dbReference>
<dbReference type="GO" id="GO:0003924">
    <property type="term" value="F:GTPase activity"/>
    <property type="evidence" value="ECO:0000250"/>
    <property type="project" value="UniProtKB"/>
</dbReference>
<dbReference type="GO" id="GO:0046872">
    <property type="term" value="F:metal ion binding"/>
    <property type="evidence" value="ECO:0007669"/>
    <property type="project" value="UniProtKB-KW"/>
</dbReference>
<dbReference type="GO" id="GO:0005200">
    <property type="term" value="F:structural constituent of cytoskeleton"/>
    <property type="evidence" value="ECO:0007669"/>
    <property type="project" value="Ensembl"/>
</dbReference>
<dbReference type="GO" id="GO:0031625">
    <property type="term" value="F:ubiquitin protein ligase binding"/>
    <property type="evidence" value="ECO:0007669"/>
    <property type="project" value="Ensembl"/>
</dbReference>
<dbReference type="GO" id="GO:0071353">
    <property type="term" value="P:cellular response to interleukin-4"/>
    <property type="evidence" value="ECO:0000314"/>
    <property type="project" value="MGI"/>
</dbReference>
<dbReference type="GO" id="GO:0000226">
    <property type="term" value="P:microtubule cytoskeleton organization"/>
    <property type="evidence" value="ECO:0007669"/>
    <property type="project" value="Ensembl"/>
</dbReference>
<dbReference type="CDD" id="cd02186">
    <property type="entry name" value="alpha_tubulin"/>
    <property type="match status" value="1"/>
</dbReference>
<dbReference type="FunFam" id="1.10.287.600:FF:000005">
    <property type="entry name" value="Tubulin alpha chain"/>
    <property type="match status" value="1"/>
</dbReference>
<dbReference type="FunFam" id="3.30.1330.20:FF:000001">
    <property type="entry name" value="Tubulin alpha chain"/>
    <property type="match status" value="1"/>
</dbReference>
<dbReference type="FunFam" id="3.40.50.1440:FF:000002">
    <property type="entry name" value="Tubulin alpha chain"/>
    <property type="match status" value="1"/>
</dbReference>
<dbReference type="Gene3D" id="1.10.287.600">
    <property type="entry name" value="Helix hairpin bin"/>
    <property type="match status" value="1"/>
</dbReference>
<dbReference type="Gene3D" id="3.30.1330.20">
    <property type="entry name" value="Tubulin/FtsZ, C-terminal domain"/>
    <property type="match status" value="1"/>
</dbReference>
<dbReference type="Gene3D" id="3.40.50.1440">
    <property type="entry name" value="Tubulin/FtsZ, GTPase domain"/>
    <property type="match status" value="1"/>
</dbReference>
<dbReference type="InterPro" id="IPR002452">
    <property type="entry name" value="Alpha_tubulin"/>
</dbReference>
<dbReference type="InterPro" id="IPR008280">
    <property type="entry name" value="Tub_FtsZ_C"/>
</dbReference>
<dbReference type="InterPro" id="IPR000217">
    <property type="entry name" value="Tubulin"/>
</dbReference>
<dbReference type="InterPro" id="IPR037103">
    <property type="entry name" value="Tubulin/FtsZ-like_C"/>
</dbReference>
<dbReference type="InterPro" id="IPR018316">
    <property type="entry name" value="Tubulin/FtsZ_2-layer-sand-dom"/>
</dbReference>
<dbReference type="InterPro" id="IPR036525">
    <property type="entry name" value="Tubulin/FtsZ_GTPase_sf"/>
</dbReference>
<dbReference type="InterPro" id="IPR023123">
    <property type="entry name" value="Tubulin_C"/>
</dbReference>
<dbReference type="InterPro" id="IPR017975">
    <property type="entry name" value="Tubulin_CS"/>
</dbReference>
<dbReference type="InterPro" id="IPR003008">
    <property type="entry name" value="Tubulin_FtsZ_GTPase"/>
</dbReference>
<dbReference type="PANTHER" id="PTHR11588">
    <property type="entry name" value="TUBULIN"/>
    <property type="match status" value="1"/>
</dbReference>
<dbReference type="Pfam" id="PF00091">
    <property type="entry name" value="Tubulin"/>
    <property type="match status" value="1"/>
</dbReference>
<dbReference type="Pfam" id="PF03953">
    <property type="entry name" value="Tubulin_C"/>
    <property type="match status" value="1"/>
</dbReference>
<dbReference type="PRINTS" id="PR01162">
    <property type="entry name" value="ALPHATUBULIN"/>
</dbReference>
<dbReference type="PRINTS" id="PR01161">
    <property type="entry name" value="TUBULIN"/>
</dbReference>
<dbReference type="SMART" id="SM00864">
    <property type="entry name" value="Tubulin"/>
    <property type="match status" value="1"/>
</dbReference>
<dbReference type="SMART" id="SM00865">
    <property type="entry name" value="Tubulin_C"/>
    <property type="match status" value="1"/>
</dbReference>
<dbReference type="SUPFAM" id="SSF55307">
    <property type="entry name" value="Tubulin C-terminal domain-like"/>
    <property type="match status" value="1"/>
</dbReference>
<dbReference type="SUPFAM" id="SSF52490">
    <property type="entry name" value="Tubulin nucleotide-binding domain-like"/>
    <property type="match status" value="1"/>
</dbReference>
<dbReference type="PROSITE" id="PS00227">
    <property type="entry name" value="TUBULIN"/>
    <property type="match status" value="1"/>
</dbReference>
<organism>
    <name type="scientific">Mus musculus</name>
    <name type="common">Mouse</name>
    <dbReference type="NCBI Taxonomy" id="10090"/>
    <lineage>
        <taxon>Eukaryota</taxon>
        <taxon>Metazoa</taxon>
        <taxon>Chordata</taxon>
        <taxon>Craniata</taxon>
        <taxon>Vertebrata</taxon>
        <taxon>Euteleostomi</taxon>
        <taxon>Mammalia</taxon>
        <taxon>Eutheria</taxon>
        <taxon>Euarchontoglires</taxon>
        <taxon>Glires</taxon>
        <taxon>Rodentia</taxon>
        <taxon>Myomorpha</taxon>
        <taxon>Muroidea</taxon>
        <taxon>Muridae</taxon>
        <taxon>Murinae</taxon>
        <taxon>Mus</taxon>
        <taxon>Mus</taxon>
    </lineage>
</organism>
<accession>P05213</accession>
<accession>Q3TY23</accession>
<accession>Q3U8B1</accession>
<accession>Q3UAW8</accession>
<accession>Q4KMW2</accession>
<sequence>MRECISIHVGQAGVQIGNACWELYCLEHGIQPDGQMPSDKTIGGGDDSFNTFFSETGAGKHVPRAVFVDLEPTVIDEVRTGTYRQLFHPEQLITGKEDAANNYARGHYTIGKEIIDLVLDRIRKLADQCTGLQGFLVFHSFGGGTGSGFTSLLMERLSVDYGKKSKLEFSIYPAPQVSTAVVEPYNSILTTHTTLEHSDCAFMVDNEAIYDICRRNLDIERPTYTNLNRLISQIVSSITASLRFDGALNVDLTEFQTNLVPYPRIHFPLATYAPVISAEKAYHEQLSVAEITNACFEPANQMVKCDPRHGKYMACCLLYRGDVVPKDVNAAIATIKTKRSIQFVDWCPTGFKVGINYQPPTVVPGGDLAKVQRAVCMLSNTTAIAEAWARLDHKFDLMYAKRAFVHWYVGEGMEEGEFSEAREDMAALEKDYEEVGVDSVEGEGEEEGEEY</sequence>
<comment type="function">
    <text evidence="1">Tubulin is the major constituent of microtubules, protein filaments consisting of alpha- and beta-tubulin heterodimers (By similarity). Microtubules grow by the addition of GTP-tubulin dimers to the microtubule end, where a stabilizing cap forms (By similarity). Below the cap, tubulin dimers are in GDP-bound state, owing to GTPase activity of alpha-tubulin (By similarity).</text>
</comment>
<comment type="catalytic activity">
    <reaction evidence="1">
        <text>GTP + H2O = GDP + phosphate + H(+)</text>
        <dbReference type="Rhea" id="RHEA:19669"/>
        <dbReference type="ChEBI" id="CHEBI:15377"/>
        <dbReference type="ChEBI" id="CHEBI:15378"/>
        <dbReference type="ChEBI" id="CHEBI:37565"/>
        <dbReference type="ChEBI" id="CHEBI:43474"/>
        <dbReference type="ChEBI" id="CHEBI:58189"/>
    </reaction>
    <physiologicalReaction direction="left-to-right" evidence="1">
        <dbReference type="Rhea" id="RHEA:19670"/>
    </physiologicalReaction>
</comment>
<comment type="cofactor">
    <cofactor evidence="1">
        <name>Mg(2+)</name>
        <dbReference type="ChEBI" id="CHEBI:18420"/>
    </cofactor>
</comment>
<comment type="subunit">
    <text evidence="1 2">Heterodimer of alpha- and beta-tubulin (By similarity). A typical microtubule is a hollow water-filled tube with an outer diameter of 25 nm and an inner diameter of 15 nM (By similarity). Alpha-beta heterodimers associate head-to-tail to form protofilaments running lengthwise along the microtubule wall with the beta-tubulin subunit facing the microtubule plus end conferring a structural polarity (By similarity). Microtubules usually have 13 protofilaments but different protofilament numbers can be found in some organisms and specialized cells (By similarity). Interacts with gamma-tubulin; the interaction allows microtubules to nucleate from the gamma-tubulin ring complex (gTuRC) (By similarity). Nascent microtubule interacts (via alpha-tubulin MREC motif) with TTC5/STRAP; this interaction may result in tubulin mRNA-targeted degradation (By similarity). Component of sperm flagellar doublet microtubules (By similarity).</text>
</comment>
<comment type="subcellular location">
    <subcellularLocation>
        <location>Cytoplasm</location>
        <location>Cytoskeleton</location>
    </subcellularLocation>
</comment>
<comment type="tissue specificity">
    <text>Ubiquitously expressed with highest levels in spleen, thymus and immature brain.</text>
</comment>
<comment type="domain">
    <text evidence="1">The MREC motif mediates interaction with TTC5/STRAP and may be critical for tubulin autoregulation.</text>
</comment>
<comment type="PTM">
    <text evidence="8 11 15">Some glutamate residues at the C-terminus are polyglycylated, resulting in polyglycine chains on the gamma-carboxyl group. Glycylation is mainly limited to tubulin incorporated into axonemes (cilia and flagella) whereas glutamylation is prevalent in neuronal cells, centrioles, axonemes, and the mitotic spindle. Both modifications can coexist on the same protein on adjacent residues, and lowering polyglycylation levels increases polyglutamylation, and reciprocally. Cilia and flagella glycylation is required for their stability and maintenance. Flagella glycylation controls sperm motility (PubMed:33414192).</text>
</comment>
<comment type="PTM">
    <text evidence="4 6 10 11">Some glutamate residues at the C-terminus are polyglutamylated, resulting in polyglutamate chains on the gamma-carboxyl group (PubMed:15890843, PubMed:1967194). Polyglutamylation plays a key role in microtubule severing by spastin (SPAST). SPAST preferentially recognizes and acts on microtubules decorated with short polyglutamate tails: severing activity by SPAST increases as the number of glutamates per tubulin rises from one to eight, but decreases beyond this glutamylation threshold (By similarity). Glutamylation is also involved in cilia motility (PubMed:23897886).</text>
</comment>
<comment type="PTM">
    <text evidence="7 9">Acetylation of alpha chains at Lys-40 is located inside the microtubule lumen. This modification has been correlated with increased microtubule stability, intracellular transport and ciliary assembly.</text>
</comment>
<comment type="PTM">
    <text evidence="1">Methylation of alpha chains at Lys-40 is found in mitotic microtubules and is required for normal mitosis and cytokinesis contributing to genomic stability.</text>
</comment>
<comment type="PTM">
    <text evidence="4">Nitration of Tyr-451 is irreversible and interferes with normal dynein intracellular distribution.</text>
</comment>
<comment type="PTM">
    <text evidence="7 9 12 13 14">Undergoes a tyrosination/detyrosination cycle, the cyclic removal and re-addition of a C-terminal tyrosine residue by the enzymes tubulin tyrosine carboxypeptidase (MATCAP1, VASH1 or VASH2) and tubulin tyrosine ligase (TTL), respectively.</text>
</comment>
<comment type="PTM">
    <molecule>Tubulin alpha-1B chain</molecule>
    <text evidence="4 7 9">Tyrosination promotes microtubule interaction with CAP-Gly domain-containing proteins such as CLIP1, CLIP2 and DCTN1 (PubMed:16954346, PubMed:19564401). Tyrosination regulates the initiation of dynein-dynactin motility via interaction with DCTN1, which brings the dynein-dynactin complex into contact with microtubules. In neurons, tyrosinated tubulins mediate the initiation of retrograde vesicle transport (By similarity).</text>
</comment>
<comment type="PTM">
    <molecule>Detyrosinated tubulin alpha-1B chain</molecule>
    <text evidence="1 12 13">Detyrosination is involved in metaphase plate congression by guiding chromosomes during mitosis: detyrosination promotes interaction with CENPE, promoting pole-proximal transport of chromosomes toward the equator (By similarity). Detyrosination increases microtubules-dependent mechanotransduction in dystrophic cardiac and skeletal muscle (PubMed:26446751). In cardiomyocytes, detyrosinated microtubules are required to resist to contractile compression during contraction: detyrosination promotes association with desmin (DES) at force-generating sarcomeres, leading to buckled microtubules and mechanical resistance to contraction (PubMed:27102488).</text>
</comment>
<comment type="similarity">
    <text evidence="16">Belongs to the tubulin family.</text>
</comment>
<gene>
    <name type="primary">Tuba1b</name>
    <name type="synonym">Tuba2</name>
</gene>
<protein>
    <recommendedName>
        <fullName>Tubulin alpha-1B chain</fullName>
        <ecNumber evidence="1">3.6.5.-</ecNumber>
    </recommendedName>
    <alternativeName>
        <fullName>Alpha-tubulin 2</fullName>
    </alternativeName>
    <alternativeName>
        <fullName>Alpha-tubulin isotype M-alpha-2</fullName>
    </alternativeName>
    <alternativeName>
        <fullName>Tubulin alpha-2 chain</fullName>
    </alternativeName>
    <component>
        <recommendedName>
            <fullName>Detyrosinated tubulin alpha-1B chain</fullName>
        </recommendedName>
    </component>
</protein>
<reference key="1">
    <citation type="journal article" date="1986" name="Mol. Cell. Biol.">
        <title>Six mouse alpha-tubulin mRNAs encode five distinct isotypes: testis-specific expression of two sister genes.</title>
        <authorList>
            <person name="Villasante A."/>
            <person name="Wang D."/>
            <person name="Dobner P."/>
            <person name="Dolph P."/>
            <person name="Lewis S.A."/>
            <person name="Cowan N.J."/>
        </authorList>
    </citation>
    <scope>NUCLEOTIDE SEQUENCE [MRNA]</scope>
</reference>
<reference key="2">
    <citation type="journal article" date="2005" name="Science">
        <title>The transcriptional landscape of the mammalian genome.</title>
        <authorList>
            <person name="Carninci P."/>
            <person name="Kasukawa T."/>
            <person name="Katayama S."/>
            <person name="Gough J."/>
            <person name="Frith M.C."/>
            <person name="Maeda N."/>
            <person name="Oyama R."/>
            <person name="Ravasi T."/>
            <person name="Lenhard B."/>
            <person name="Wells C."/>
            <person name="Kodzius R."/>
            <person name="Shimokawa K."/>
            <person name="Bajic V.B."/>
            <person name="Brenner S.E."/>
            <person name="Batalov S."/>
            <person name="Forrest A.R."/>
            <person name="Zavolan M."/>
            <person name="Davis M.J."/>
            <person name="Wilming L.G."/>
            <person name="Aidinis V."/>
            <person name="Allen J.E."/>
            <person name="Ambesi-Impiombato A."/>
            <person name="Apweiler R."/>
            <person name="Aturaliya R.N."/>
            <person name="Bailey T.L."/>
            <person name="Bansal M."/>
            <person name="Baxter L."/>
            <person name="Beisel K.W."/>
            <person name="Bersano T."/>
            <person name="Bono H."/>
            <person name="Chalk A.M."/>
            <person name="Chiu K.P."/>
            <person name="Choudhary V."/>
            <person name="Christoffels A."/>
            <person name="Clutterbuck D.R."/>
            <person name="Crowe M.L."/>
            <person name="Dalla E."/>
            <person name="Dalrymple B.P."/>
            <person name="de Bono B."/>
            <person name="Della Gatta G."/>
            <person name="di Bernardo D."/>
            <person name="Down T."/>
            <person name="Engstrom P."/>
            <person name="Fagiolini M."/>
            <person name="Faulkner G."/>
            <person name="Fletcher C.F."/>
            <person name="Fukushima T."/>
            <person name="Furuno M."/>
            <person name="Futaki S."/>
            <person name="Gariboldi M."/>
            <person name="Georgii-Hemming P."/>
            <person name="Gingeras T.R."/>
            <person name="Gojobori T."/>
            <person name="Green R.E."/>
            <person name="Gustincich S."/>
            <person name="Harbers M."/>
            <person name="Hayashi Y."/>
            <person name="Hensch T.K."/>
            <person name="Hirokawa N."/>
            <person name="Hill D."/>
            <person name="Huminiecki L."/>
            <person name="Iacono M."/>
            <person name="Ikeo K."/>
            <person name="Iwama A."/>
            <person name="Ishikawa T."/>
            <person name="Jakt M."/>
            <person name="Kanapin A."/>
            <person name="Katoh M."/>
            <person name="Kawasawa Y."/>
            <person name="Kelso J."/>
            <person name="Kitamura H."/>
            <person name="Kitano H."/>
            <person name="Kollias G."/>
            <person name="Krishnan S.P."/>
            <person name="Kruger A."/>
            <person name="Kummerfeld S.K."/>
            <person name="Kurochkin I.V."/>
            <person name="Lareau L.F."/>
            <person name="Lazarevic D."/>
            <person name="Lipovich L."/>
            <person name="Liu J."/>
            <person name="Liuni S."/>
            <person name="McWilliam S."/>
            <person name="Madan Babu M."/>
            <person name="Madera M."/>
            <person name="Marchionni L."/>
            <person name="Matsuda H."/>
            <person name="Matsuzawa S."/>
            <person name="Miki H."/>
            <person name="Mignone F."/>
            <person name="Miyake S."/>
            <person name="Morris K."/>
            <person name="Mottagui-Tabar S."/>
            <person name="Mulder N."/>
            <person name="Nakano N."/>
            <person name="Nakauchi H."/>
            <person name="Ng P."/>
            <person name="Nilsson R."/>
            <person name="Nishiguchi S."/>
            <person name="Nishikawa S."/>
            <person name="Nori F."/>
            <person name="Ohara O."/>
            <person name="Okazaki Y."/>
            <person name="Orlando V."/>
            <person name="Pang K.C."/>
            <person name="Pavan W.J."/>
            <person name="Pavesi G."/>
            <person name="Pesole G."/>
            <person name="Petrovsky N."/>
            <person name="Piazza S."/>
            <person name="Reed J."/>
            <person name="Reid J.F."/>
            <person name="Ring B.Z."/>
            <person name="Ringwald M."/>
            <person name="Rost B."/>
            <person name="Ruan Y."/>
            <person name="Salzberg S.L."/>
            <person name="Sandelin A."/>
            <person name="Schneider C."/>
            <person name="Schoenbach C."/>
            <person name="Sekiguchi K."/>
            <person name="Semple C.A."/>
            <person name="Seno S."/>
            <person name="Sessa L."/>
            <person name="Sheng Y."/>
            <person name="Shibata Y."/>
            <person name="Shimada H."/>
            <person name="Shimada K."/>
            <person name="Silva D."/>
            <person name="Sinclair B."/>
            <person name="Sperling S."/>
            <person name="Stupka E."/>
            <person name="Sugiura K."/>
            <person name="Sultana R."/>
            <person name="Takenaka Y."/>
            <person name="Taki K."/>
            <person name="Tammoja K."/>
            <person name="Tan S.L."/>
            <person name="Tang S."/>
            <person name="Taylor M.S."/>
            <person name="Tegner J."/>
            <person name="Teichmann S.A."/>
            <person name="Ueda H.R."/>
            <person name="van Nimwegen E."/>
            <person name="Verardo R."/>
            <person name="Wei C.L."/>
            <person name="Yagi K."/>
            <person name="Yamanishi H."/>
            <person name="Zabarovsky E."/>
            <person name="Zhu S."/>
            <person name="Zimmer A."/>
            <person name="Hide W."/>
            <person name="Bult C."/>
            <person name="Grimmond S.M."/>
            <person name="Teasdale R.D."/>
            <person name="Liu E.T."/>
            <person name="Brusic V."/>
            <person name="Quackenbush J."/>
            <person name="Wahlestedt C."/>
            <person name="Mattick J.S."/>
            <person name="Hume D.A."/>
            <person name="Kai C."/>
            <person name="Sasaki D."/>
            <person name="Tomaru Y."/>
            <person name="Fukuda S."/>
            <person name="Kanamori-Katayama M."/>
            <person name="Suzuki M."/>
            <person name="Aoki J."/>
            <person name="Arakawa T."/>
            <person name="Iida J."/>
            <person name="Imamura K."/>
            <person name="Itoh M."/>
            <person name="Kato T."/>
            <person name="Kawaji H."/>
            <person name="Kawagashira N."/>
            <person name="Kawashima T."/>
            <person name="Kojima M."/>
            <person name="Kondo S."/>
            <person name="Konno H."/>
            <person name="Nakano K."/>
            <person name="Ninomiya N."/>
            <person name="Nishio T."/>
            <person name="Okada M."/>
            <person name="Plessy C."/>
            <person name="Shibata K."/>
            <person name="Shiraki T."/>
            <person name="Suzuki S."/>
            <person name="Tagami M."/>
            <person name="Waki K."/>
            <person name="Watahiki A."/>
            <person name="Okamura-Oho Y."/>
            <person name="Suzuki H."/>
            <person name="Kawai J."/>
            <person name="Hayashizaki Y."/>
        </authorList>
    </citation>
    <scope>NUCLEOTIDE SEQUENCE [LARGE SCALE MRNA]</scope>
    <source>
        <strain>C57BL/6J</strain>
        <strain>NOD</strain>
        <tissue>Amnion</tissue>
        <tissue>Bone marrow</tissue>
        <tissue>Eye</tissue>
        <tissue>Kidney</tissue>
        <tissue>Liver</tissue>
        <tissue>Thymus</tissue>
        <tissue>Visual cortex</tissue>
    </source>
</reference>
<reference key="3">
    <citation type="journal article" date="2004" name="Genome Res.">
        <title>The status, quality, and expansion of the NIH full-length cDNA project: the Mammalian Gene Collection (MGC).</title>
        <authorList>
            <consortium name="The MGC Project Team"/>
        </authorList>
    </citation>
    <scope>NUCLEOTIDE SEQUENCE [LARGE SCALE MRNA]</scope>
    <source>
        <strain>C57BL/6J</strain>
        <strain>Czech II</strain>
        <strain>FVB/N</strain>
        <tissue>Limb</tissue>
        <tissue>Mammary tumor</tissue>
        <tissue>Olfactory epithelium</tissue>
        <tissue>Salivary gland</tissue>
    </source>
</reference>
<reference key="4">
    <citation type="submission" date="2009-01" db="UniProtKB">
        <authorList>
            <person name="Lubec G."/>
            <person name="Kang S.U."/>
            <person name="Klug S."/>
            <person name="Sunyer B."/>
            <person name="Chen W.-Q."/>
        </authorList>
    </citation>
    <scope>PROTEIN SEQUENCE OF 41-60; 65-79; 85-121; 157-163; 216-304; 312-320; 327-336; 340-370; 374-390; 395-401 AND 403-432</scope>
    <scope>IDENTIFICATION BY MASS SPECTROMETRY</scope>
    <source>
        <strain>C57BL/6J</strain>
        <strain>OF1</strain>
        <tissue>Brain</tissue>
        <tissue>Hippocampus</tissue>
    </source>
</reference>
<reference key="5">
    <citation type="journal article" date="1985" name="J. Cell Biol.">
        <title>Five mouse tubulin isotypes and their regulated expression during development.</title>
        <authorList>
            <person name="Lewis S.A."/>
            <person name="Lee M.G.-S."/>
            <person name="Cowan N.J."/>
        </authorList>
    </citation>
    <scope>NUCLEOTIDE SEQUENCE [MRNA] OF 100-451</scope>
</reference>
<reference key="6">
    <citation type="journal article" date="1990" name="Science">
        <title>Posttranslational glutamylation of alpha-tubulin.</title>
        <authorList>
            <person name="Edde B."/>
            <person name="Rossier J."/>
            <person name="Le Caer J.P."/>
            <person name="Desbruyeres E."/>
            <person name="Gros F."/>
            <person name="Denoulet P."/>
        </authorList>
    </citation>
    <scope>PROTEIN SEQUENCE OF 440-448</scope>
    <scope>GLUTAMYLATION AT GLU-445</scope>
</reference>
<reference key="7">
    <citation type="journal article" date="2005" name="Science">
        <title>Tubulin polyglutamylase enzymes are members of the TTL domain protein family.</title>
        <authorList>
            <person name="Janke C."/>
            <person name="Rogowski K."/>
            <person name="Wloga D."/>
            <person name="Regnard C."/>
            <person name="Kajava A.V."/>
            <person name="Strub J.-M."/>
            <person name="Temurak N."/>
            <person name="van Dijk J."/>
            <person name="Boucher D."/>
            <person name="van Dorsselaer A."/>
            <person name="Suryavanshi S."/>
            <person name="Gaertig J."/>
            <person name="Edde B."/>
        </authorList>
    </citation>
    <scope>GLUTAMYLATION</scope>
</reference>
<reference key="8">
    <citation type="journal article" date="2006" name="J. Cell Biol.">
        <title>Tubulin tyrosination is a major factor affecting the recruitment of CAP-Gly proteins at microtubule plus ends.</title>
        <authorList>
            <person name="Peris L."/>
            <person name="Thery M."/>
            <person name="Faure J."/>
            <person name="Saoudi Y."/>
            <person name="Lafanechere L."/>
            <person name="Chilton J.K."/>
            <person name="Gordon-Weeks P."/>
            <person name="Galjart N."/>
            <person name="Bornens M."/>
            <person name="Wordeman L."/>
            <person name="Wehland J."/>
            <person name="Andrieux A."/>
            <person name="Job D."/>
        </authorList>
    </citation>
    <scope>TYROSINATION</scope>
</reference>
<reference key="9">
    <citation type="journal article" date="2009" name="Cell">
        <title>Evolutionary divergence of enzymatic mechanisms for posttranslational polyglycylation.</title>
        <authorList>
            <person name="Rogowski K."/>
            <person name="Juge F."/>
            <person name="van Dijk J."/>
            <person name="Wloga D."/>
            <person name="Strub J.-M."/>
            <person name="Levilliers N."/>
            <person name="Thomas D."/>
            <person name="Bre M.-H."/>
            <person name="Van Dorsselaer A."/>
            <person name="Gaertig J."/>
            <person name="Janke C."/>
        </authorList>
    </citation>
    <scope>GLYCYLATION</scope>
</reference>
<reference key="10">
    <citation type="journal article" date="2009" name="J. Cell Biol.">
        <title>Motor-dependent microtubule disassembly driven by tubulin tyrosination.</title>
        <authorList>
            <person name="Peris L."/>
            <person name="Wagenbach M."/>
            <person name="Lafanechere L."/>
            <person name="Brocard J."/>
            <person name="Moore A.T."/>
            <person name="Kozielski F."/>
            <person name="Job D."/>
            <person name="Wordeman L."/>
            <person name="Andrieux A."/>
        </authorList>
    </citation>
    <scope>TYROSINATION</scope>
</reference>
<reference key="11">
    <citation type="journal article" date="2013" name="J. Cell Biol.">
        <title>Tubulin glycylases and glutamylases have distinct functions in stabilization and motility of ependymal cilia.</title>
        <authorList>
            <person name="Bosch Grau M."/>
            <person name="Gonzalez Curto G."/>
            <person name="Rocha C."/>
            <person name="Magiera M.M."/>
            <person name="Marques Sousa P."/>
            <person name="Giordano T."/>
            <person name="Spassky N."/>
            <person name="Janke C."/>
        </authorList>
    </citation>
    <scope>GLYCYLATION</scope>
    <scope>GLUTAMYLATION</scope>
</reference>
<reference key="12">
    <citation type="journal article" date="2015" name="Nat. Commun.">
        <title>Detyrosinated microtubules modulate mechanotransduction in heart and skeletal muscle.</title>
        <authorList>
            <person name="Kerr J.P."/>
            <person name="Robison P."/>
            <person name="Shi G."/>
            <person name="Bogush A.I."/>
            <person name="Kempema A.M."/>
            <person name="Hexum J.K."/>
            <person name="Becerra N."/>
            <person name="Harki D.A."/>
            <person name="Martin S.S."/>
            <person name="Raiteri R."/>
            <person name="Prosser B.L."/>
            <person name="Ward C.W."/>
        </authorList>
    </citation>
    <scope>DETYROSINATION</scope>
</reference>
<reference key="13">
    <citation type="journal article" date="2016" name="Science">
        <title>Detyrosinated microtubules buckle and bear load in contracting cardiomyocytes.</title>
        <authorList>
            <person name="Robison P."/>
            <person name="Caporizzo M.A."/>
            <person name="Ahmadzadeh H."/>
            <person name="Bogush A.I."/>
            <person name="Chen C.Y."/>
            <person name="Margulies K.B."/>
            <person name="Shenoy V.B."/>
            <person name="Prosser B.L."/>
        </authorList>
    </citation>
    <scope>DETYROSINATION</scope>
</reference>
<reference key="14">
    <citation type="journal article" date="2017" name="Science">
        <title>Vasohibins/SVBP are tubulin carboxypeptidases (TCPs) that regulate neuron differentiation.</title>
        <authorList>
            <person name="Aillaud C."/>
            <person name="Bosc C."/>
            <person name="Peris L."/>
            <person name="Bosson A."/>
            <person name="Heemeryck P."/>
            <person name="Van Dijk J."/>
            <person name="Le Friec J."/>
            <person name="Boulan B."/>
            <person name="Vossier F."/>
            <person name="Sanman L.E."/>
            <person name="Syed S."/>
            <person name="Amara N."/>
            <person name="Coute Y."/>
            <person name="Lafanechere L."/>
            <person name="Denarier E."/>
            <person name="Delphin C."/>
            <person name="Pelletier L."/>
            <person name="Humbert S."/>
            <person name="Bogyo M."/>
            <person name="Andrieux A."/>
            <person name="Rogowski K."/>
            <person name="Moutin M.J."/>
        </authorList>
    </citation>
    <scope>DETYROSINATION</scope>
</reference>
<reference key="15">
    <citation type="journal article" date="2021" name="Science">
        <title>Tubulin glycylation controls axonemal dynein activity, flagellar beat, and male fertility.</title>
        <authorList>
            <person name="Gadadhar S."/>
            <person name="Alvarez Viar G."/>
            <person name="Hansen J.N."/>
            <person name="Gong A."/>
            <person name="Kostarev A."/>
            <person name="Ialy-Radio C."/>
            <person name="Leboucher S."/>
            <person name="Whitfield M."/>
            <person name="Ziyyat A."/>
            <person name="Toure A."/>
            <person name="Alvarez L."/>
            <person name="Pigino G."/>
            <person name="Janke C."/>
        </authorList>
    </citation>
    <scope>GLYCYLATION</scope>
</reference>
<feature type="chain" id="PRO_0000048121" description="Tubulin alpha-1B chain">
    <location>
        <begin position="1"/>
        <end position="451"/>
    </location>
</feature>
<feature type="chain" id="PRO_0000437387" description="Detyrosinated tubulin alpha-1B chain" evidence="17 18 19">
    <location>
        <begin position="1"/>
        <end position="450"/>
    </location>
</feature>
<feature type="region of interest" description="Disordered" evidence="5">
    <location>
        <begin position="432"/>
        <end position="451"/>
    </location>
</feature>
<feature type="short sequence motif" description="MREC motif" evidence="1">
    <location>
        <begin position="1"/>
        <end position="4"/>
    </location>
</feature>
<feature type="active site" evidence="1">
    <location>
        <position position="254"/>
    </location>
</feature>
<feature type="binding site" evidence="1">
    <location>
        <position position="10"/>
    </location>
    <ligand>
        <name>GTP</name>
        <dbReference type="ChEBI" id="CHEBI:37565"/>
    </ligand>
</feature>
<feature type="binding site" evidence="1">
    <location>
        <position position="11"/>
    </location>
    <ligand>
        <name>GTP</name>
        <dbReference type="ChEBI" id="CHEBI:37565"/>
    </ligand>
</feature>
<feature type="binding site" evidence="1">
    <location>
        <position position="12"/>
    </location>
    <ligand>
        <name>GTP</name>
        <dbReference type="ChEBI" id="CHEBI:37565"/>
    </ligand>
</feature>
<feature type="binding site" evidence="1">
    <location>
        <position position="15"/>
    </location>
    <ligand>
        <name>GTP</name>
        <dbReference type="ChEBI" id="CHEBI:37565"/>
    </ligand>
</feature>
<feature type="binding site" evidence="1">
    <location>
        <position position="71"/>
    </location>
    <ligand>
        <name>GTP</name>
        <dbReference type="ChEBI" id="CHEBI:37565"/>
    </ligand>
</feature>
<feature type="binding site" evidence="1">
    <location>
        <position position="71"/>
    </location>
    <ligand>
        <name>Mg(2+)</name>
        <dbReference type="ChEBI" id="CHEBI:18420"/>
    </ligand>
</feature>
<feature type="binding site" evidence="1">
    <location>
        <position position="99"/>
    </location>
    <ligand>
        <name>GTP</name>
        <dbReference type="ChEBI" id="CHEBI:37565"/>
    </ligand>
</feature>
<feature type="binding site" evidence="1">
    <location>
        <position position="140"/>
    </location>
    <ligand>
        <name>GTP</name>
        <dbReference type="ChEBI" id="CHEBI:37565"/>
    </ligand>
</feature>
<feature type="binding site" evidence="1">
    <location>
        <position position="143"/>
    </location>
    <ligand>
        <name>GTP</name>
        <dbReference type="ChEBI" id="CHEBI:37565"/>
    </ligand>
</feature>
<feature type="binding site" evidence="1">
    <location>
        <position position="144"/>
    </location>
    <ligand>
        <name>GTP</name>
        <dbReference type="ChEBI" id="CHEBI:37565"/>
    </ligand>
</feature>
<feature type="binding site" evidence="1">
    <location>
        <position position="145"/>
    </location>
    <ligand>
        <name>GTP</name>
        <dbReference type="ChEBI" id="CHEBI:37565"/>
    </ligand>
</feature>
<feature type="binding site" evidence="1">
    <location>
        <position position="146"/>
    </location>
    <ligand>
        <name>GTP</name>
        <dbReference type="ChEBI" id="CHEBI:37565"/>
    </ligand>
</feature>
<feature type="binding site" evidence="1">
    <location>
        <position position="179"/>
    </location>
    <ligand>
        <name>GTP</name>
        <dbReference type="ChEBI" id="CHEBI:37565"/>
    </ligand>
</feature>
<feature type="binding site" evidence="1">
    <location>
        <position position="183"/>
    </location>
    <ligand>
        <name>GTP</name>
        <dbReference type="ChEBI" id="CHEBI:37565"/>
    </ligand>
</feature>
<feature type="binding site" evidence="1">
    <location>
        <position position="206"/>
    </location>
    <ligand>
        <name>GTP</name>
        <dbReference type="ChEBI" id="CHEBI:37565"/>
    </ligand>
</feature>
<feature type="binding site" evidence="1">
    <location>
        <position position="224"/>
    </location>
    <ligand>
        <name>GTP</name>
        <dbReference type="ChEBI" id="CHEBI:37565"/>
    </ligand>
</feature>
<feature type="binding site" evidence="1">
    <location>
        <position position="228"/>
    </location>
    <ligand>
        <name>GTP</name>
        <dbReference type="ChEBI" id="CHEBI:37565"/>
    </ligand>
</feature>
<feature type="binding site" evidence="1">
    <location>
        <position position="252"/>
    </location>
    <ligand>
        <name>GTP</name>
        <dbReference type="ChEBI" id="CHEBI:37565"/>
    </ligand>
</feature>
<feature type="site" description="Involved in polymerization">
    <location>
        <position position="451"/>
    </location>
</feature>
<feature type="modified residue" description="N6,N6,N6-trimethyllysine; alternate" evidence="1">
    <location>
        <position position="40"/>
    </location>
</feature>
<feature type="modified residue" description="N6-acetyllysine; alternate" evidence="1">
    <location>
        <position position="40"/>
    </location>
</feature>
<feature type="modified residue" description="Phosphoserine" evidence="1">
    <location>
        <position position="48"/>
    </location>
</feature>
<feature type="modified residue" description="Phosphoserine" evidence="1">
    <location>
        <position position="232"/>
    </location>
</feature>
<feature type="modified residue" description="3'-nitrotyrosine" evidence="3">
    <location>
        <position position="282"/>
    </location>
</feature>
<feature type="modified residue" description="Omega-N-methylarginine" evidence="1">
    <location>
        <position position="339"/>
    </location>
</feature>
<feature type="modified residue" description="Phosphoserine" evidence="3">
    <location>
        <position position="439"/>
    </location>
</feature>
<feature type="modified residue" description="5-glutamyl polyglutamate" evidence="1">
    <location>
        <position position="443"/>
    </location>
</feature>
<feature type="modified residue" description="5-glutamyl polyglutamate" evidence="10">
    <location>
        <position position="445"/>
    </location>
</feature>
<feature type="modified residue" description="3'-nitrotyrosine" evidence="4">
    <location>
        <position position="451"/>
    </location>
</feature>
<feature type="cross-link" description="Glycyl lysine isopeptide (Lys-Gly) (interchain with G-Cter in ubiquitin)" evidence="1">
    <location>
        <position position="326"/>
    </location>
</feature>
<feature type="cross-link" description="Glycyl lysine isopeptide (Lys-Gly) (interchain with G-Cter in ubiquitin)" evidence="1">
    <location>
        <position position="370"/>
    </location>
</feature>
<feature type="sequence conflict" description="In Ref. 2; BAE30708/BAE31107." evidence="16" ref="2">
    <original>E</original>
    <variation>G</variation>
    <location>
        <position position="55"/>
    </location>
</feature>
<feature type="sequence conflict" description="In Ref. 2; BAE34741." evidence="16" ref="2">
    <original>I</original>
    <variation>T</variation>
    <location>
        <position position="114"/>
    </location>
</feature>
<feature type="sequence conflict" description="In Ref. 2; BAE29999/BAE30196." evidence="16" ref="2">
    <original>L</original>
    <variation>P</variation>
    <location>
        <position position="119"/>
    </location>
</feature>
<feature type="sequence conflict" description="In Ref. 5; AAA40507." evidence="16" ref="5">
    <original>FL</original>
    <variation>LF</variation>
    <location>
        <begin position="135"/>
        <end position="136"/>
    </location>
</feature>
<feature type="sequence conflict" description="In Ref. 1 and 5; AAA40507." evidence="16" ref="1 5">
    <original>S</original>
    <variation>T</variation>
    <location>
        <position position="340"/>
    </location>
</feature>